<feature type="chain" id="PRO_0000067016" description="Inversin">
    <location>
        <begin position="1"/>
        <end position="1065"/>
    </location>
</feature>
<feature type="repeat" description="ANK 1">
    <location>
        <begin position="13"/>
        <end position="42"/>
    </location>
</feature>
<feature type="repeat" description="ANK 2">
    <location>
        <begin position="47"/>
        <end position="76"/>
    </location>
</feature>
<feature type="repeat" description="ANK 3">
    <location>
        <begin position="80"/>
        <end position="110"/>
    </location>
</feature>
<feature type="repeat" description="ANK 4">
    <location>
        <begin position="113"/>
        <end position="144"/>
    </location>
</feature>
<feature type="repeat" description="ANK 5">
    <location>
        <begin position="148"/>
        <end position="177"/>
    </location>
</feature>
<feature type="repeat" description="ANK 6">
    <location>
        <begin position="181"/>
        <end position="213"/>
    </location>
</feature>
<feature type="repeat" description="ANK 7">
    <location>
        <begin position="220"/>
        <end position="250"/>
    </location>
</feature>
<feature type="repeat" description="ANK 8">
    <location>
        <begin position="254"/>
        <end position="283"/>
    </location>
</feature>
<feature type="repeat" description="ANK 9">
    <location>
        <begin position="288"/>
        <end position="317"/>
    </location>
</feature>
<feature type="repeat" description="ANK 10">
    <location>
        <begin position="321"/>
        <end position="350"/>
    </location>
</feature>
<feature type="repeat" description="ANK 11">
    <location>
        <begin position="356"/>
        <end position="385"/>
    </location>
</feature>
<feature type="repeat" description="ANK 12">
    <location>
        <begin position="389"/>
        <end position="418"/>
    </location>
</feature>
<feature type="repeat" description="ANK 13">
    <location>
        <begin position="422"/>
        <end position="451"/>
    </location>
</feature>
<feature type="repeat" description="ANK 14">
    <location>
        <begin position="455"/>
        <end position="484"/>
    </location>
</feature>
<feature type="repeat" description="ANK 15">
    <location>
        <begin position="488"/>
        <end position="517"/>
    </location>
</feature>
<feature type="repeat" description="ANK 16">
    <location>
        <begin position="523"/>
        <end position="553"/>
    </location>
</feature>
<feature type="domain" description="IQ 1" evidence="2">
    <location>
        <begin position="555"/>
        <end position="584"/>
    </location>
</feature>
<feature type="domain" description="IQ 2" evidence="2">
    <location>
        <begin position="916"/>
        <end position="945"/>
    </location>
</feature>
<feature type="region of interest" description="Disordered" evidence="3">
    <location>
        <begin position="589"/>
        <end position="833"/>
    </location>
</feature>
<feature type="region of interest" description="Disordered" evidence="3">
    <location>
        <begin position="847"/>
        <end position="886"/>
    </location>
</feature>
<feature type="region of interest" description="Disordered" evidence="3">
    <location>
        <begin position="976"/>
        <end position="999"/>
    </location>
</feature>
<feature type="short sequence motif" description="D-box 1">
    <location>
        <begin position="490"/>
        <end position="498"/>
    </location>
</feature>
<feature type="short sequence motif" description="D-box 2">
    <location>
        <begin position="909"/>
        <end position="917"/>
    </location>
</feature>
<feature type="compositionally biased region" description="Basic and acidic residues" evidence="3">
    <location>
        <begin position="589"/>
        <end position="616"/>
    </location>
</feature>
<feature type="compositionally biased region" description="Polar residues" evidence="3">
    <location>
        <begin position="627"/>
        <end position="640"/>
    </location>
</feature>
<feature type="compositionally biased region" description="Polar residues" evidence="3">
    <location>
        <begin position="677"/>
        <end position="686"/>
    </location>
</feature>
<feature type="compositionally biased region" description="Basic and acidic residues" evidence="3">
    <location>
        <begin position="687"/>
        <end position="697"/>
    </location>
</feature>
<feature type="compositionally biased region" description="Basic and acidic residues" evidence="3">
    <location>
        <begin position="706"/>
        <end position="715"/>
    </location>
</feature>
<feature type="compositionally biased region" description="Basic and acidic residues" evidence="3">
    <location>
        <begin position="723"/>
        <end position="736"/>
    </location>
</feature>
<feature type="compositionally biased region" description="Basic and acidic residues" evidence="3">
    <location>
        <begin position="752"/>
        <end position="762"/>
    </location>
</feature>
<feature type="compositionally biased region" description="Basic and acidic residues" evidence="3">
    <location>
        <begin position="770"/>
        <end position="786"/>
    </location>
</feature>
<feature type="compositionally biased region" description="Basic and acidic residues" evidence="3">
    <location>
        <begin position="853"/>
        <end position="863"/>
    </location>
</feature>
<feature type="compositionally biased region" description="Low complexity" evidence="3">
    <location>
        <begin position="983"/>
        <end position="994"/>
    </location>
</feature>
<feature type="modified residue" description="3-hydroxyasparagine" evidence="9">
    <location>
        <position position="75"/>
    </location>
</feature>
<feature type="modified residue" description="Phosphoserine" evidence="13">
    <location>
        <position position="661"/>
    </location>
</feature>
<feature type="splice variant" id="VSP_014495" description="In isoform 3." evidence="11">
    <original>GNYRFMKLLL</original>
    <variation>ALRTISTGRI</variation>
    <location>
        <begin position="92"/>
        <end position="101"/>
    </location>
</feature>
<feature type="splice variant" id="VSP_014496" description="In isoform 3." evidence="11">
    <location>
        <begin position="102"/>
        <end position="1065"/>
    </location>
</feature>
<feature type="splice variant" id="VSP_014497" description="In isoform 2." evidence="10">
    <location>
        <begin position="727"/>
        <end position="896"/>
    </location>
</feature>
<feature type="sequence variant" id="VAR_044119" description="In dbSNP:rs2491097.">
    <original>S</original>
    <variation>L</variation>
    <location>
        <position position="242"/>
    </location>
</feature>
<feature type="sequence variant" id="VAR_022822" description="In NPHP2." evidence="5">
    <original>P</original>
    <variation>R</variation>
    <location>
        <position position="482"/>
    </location>
</feature>
<feature type="sequence variant" id="VAR_022823" description="In NPHP2; impairs ability to target DVL1 for degradation; dbSNP:rs121964995." evidence="5">
    <original>L</original>
    <variation>S</variation>
    <location>
        <position position="493"/>
    </location>
</feature>
<feature type="sequence variant" id="VAR_044120" description="In dbSNP:rs1052867.">
    <original>S</original>
    <variation>R</variation>
    <location>
        <position position="888"/>
    </location>
</feature>
<feature type="sequence conflict" description="In Ref. 5; AAI11762." evidence="12" ref="5">
    <original>K</original>
    <variation>Q</variation>
    <location>
        <position position="487"/>
    </location>
</feature>
<feature type="sequence conflict" description="In Ref. 2; AAC79436/AAC79456." evidence="12" ref="2">
    <original>A</original>
    <variation>G</variation>
    <location>
        <position position="764"/>
    </location>
</feature>
<name>INVS_HUMAN</name>
<protein>
    <recommendedName>
        <fullName>Inversin</fullName>
    </recommendedName>
    <alternativeName>
        <fullName>Inversion of embryo turning homolog</fullName>
    </alternativeName>
    <alternativeName>
        <fullName>Nephrocystin-2</fullName>
    </alternativeName>
</protein>
<reference key="1">
    <citation type="journal article" date="2002" name="Hum. Genet.">
        <title>Identification, genomic organization, chromosomal mapping and mutation analysis of the human INV gene, the ortholog of a murine gene implicated in left-right axis development and biliary atresia.</title>
        <authorList>
            <person name="Schoen P."/>
            <person name="Tsuchiya K."/>
            <person name="Lenoir D."/>
            <person name="Mochizuki T."/>
            <person name="Guichard C."/>
            <person name="Takai S."/>
            <person name="Maiti A.K."/>
            <person name="Nihei H."/>
            <person name="Weil J."/>
            <person name="Yokoyama T."/>
            <person name="Bouvagnet P."/>
        </authorList>
    </citation>
    <scope>NUCLEOTIDE SEQUENCE [MRNA] (ISOFORM 1)</scope>
    <scope>TISSUE SPECIFICITY</scope>
    <source>
        <tissue>Kidney</tissue>
    </source>
</reference>
<reference key="2">
    <citation type="journal article" date="2002" name="Hum. Genet.">
        <title>The left-right determinant inversin has highly conserved ankyrin repeat and IQ domains and interacts with calmodulin.</title>
        <authorList>
            <person name="Morgan D."/>
            <person name="Goodship J."/>
            <person name="Essner J.J."/>
            <person name="Vogan K.J."/>
            <person name="Turnpenny L."/>
            <person name="Yost H.J."/>
            <person name="Tabin C.J."/>
            <person name="Strachan T."/>
        </authorList>
    </citation>
    <scope>NUCLEOTIDE SEQUENCE [GENOMIC DNA / MRNA] (ISOFORMS 1 AND 2)</scope>
</reference>
<reference key="3">
    <citation type="journal article" date="2004" name="Nature">
        <title>DNA sequence and analysis of human chromosome 9.</title>
        <authorList>
            <person name="Humphray S.J."/>
            <person name="Oliver K."/>
            <person name="Hunt A.R."/>
            <person name="Plumb R.W."/>
            <person name="Loveland J.E."/>
            <person name="Howe K.L."/>
            <person name="Andrews T.D."/>
            <person name="Searle S."/>
            <person name="Hunt S.E."/>
            <person name="Scott C.E."/>
            <person name="Jones M.C."/>
            <person name="Ainscough R."/>
            <person name="Almeida J.P."/>
            <person name="Ambrose K.D."/>
            <person name="Ashwell R.I.S."/>
            <person name="Babbage A.K."/>
            <person name="Babbage S."/>
            <person name="Bagguley C.L."/>
            <person name="Bailey J."/>
            <person name="Banerjee R."/>
            <person name="Barker D.J."/>
            <person name="Barlow K.F."/>
            <person name="Bates K."/>
            <person name="Beasley H."/>
            <person name="Beasley O."/>
            <person name="Bird C.P."/>
            <person name="Bray-Allen S."/>
            <person name="Brown A.J."/>
            <person name="Brown J.Y."/>
            <person name="Burford D."/>
            <person name="Burrill W."/>
            <person name="Burton J."/>
            <person name="Carder C."/>
            <person name="Carter N.P."/>
            <person name="Chapman J.C."/>
            <person name="Chen Y."/>
            <person name="Clarke G."/>
            <person name="Clark S.Y."/>
            <person name="Clee C.M."/>
            <person name="Clegg S."/>
            <person name="Collier R.E."/>
            <person name="Corby N."/>
            <person name="Crosier M."/>
            <person name="Cummings A.T."/>
            <person name="Davies J."/>
            <person name="Dhami P."/>
            <person name="Dunn M."/>
            <person name="Dutta I."/>
            <person name="Dyer L.W."/>
            <person name="Earthrowl M.E."/>
            <person name="Faulkner L."/>
            <person name="Fleming C.J."/>
            <person name="Frankish A."/>
            <person name="Frankland J.A."/>
            <person name="French L."/>
            <person name="Fricker D.G."/>
            <person name="Garner P."/>
            <person name="Garnett J."/>
            <person name="Ghori J."/>
            <person name="Gilbert J.G.R."/>
            <person name="Glison C."/>
            <person name="Grafham D.V."/>
            <person name="Gribble S."/>
            <person name="Griffiths C."/>
            <person name="Griffiths-Jones S."/>
            <person name="Grocock R."/>
            <person name="Guy J."/>
            <person name="Hall R.E."/>
            <person name="Hammond S."/>
            <person name="Harley J.L."/>
            <person name="Harrison E.S.I."/>
            <person name="Hart E.A."/>
            <person name="Heath P.D."/>
            <person name="Henderson C.D."/>
            <person name="Hopkins B.L."/>
            <person name="Howard P.J."/>
            <person name="Howden P.J."/>
            <person name="Huckle E."/>
            <person name="Johnson C."/>
            <person name="Johnson D."/>
            <person name="Joy A.A."/>
            <person name="Kay M."/>
            <person name="Keenan S."/>
            <person name="Kershaw J.K."/>
            <person name="Kimberley A.M."/>
            <person name="King A."/>
            <person name="Knights A."/>
            <person name="Laird G.K."/>
            <person name="Langford C."/>
            <person name="Lawlor S."/>
            <person name="Leongamornlert D.A."/>
            <person name="Leversha M."/>
            <person name="Lloyd C."/>
            <person name="Lloyd D.M."/>
            <person name="Lovell J."/>
            <person name="Martin S."/>
            <person name="Mashreghi-Mohammadi M."/>
            <person name="Matthews L."/>
            <person name="McLaren S."/>
            <person name="McLay K.E."/>
            <person name="McMurray A."/>
            <person name="Milne S."/>
            <person name="Nickerson T."/>
            <person name="Nisbett J."/>
            <person name="Nordsiek G."/>
            <person name="Pearce A.V."/>
            <person name="Peck A.I."/>
            <person name="Porter K.M."/>
            <person name="Pandian R."/>
            <person name="Pelan S."/>
            <person name="Phillimore B."/>
            <person name="Povey S."/>
            <person name="Ramsey Y."/>
            <person name="Rand V."/>
            <person name="Scharfe M."/>
            <person name="Sehra H.K."/>
            <person name="Shownkeen R."/>
            <person name="Sims S.K."/>
            <person name="Skuce C.D."/>
            <person name="Smith M."/>
            <person name="Steward C.A."/>
            <person name="Swarbreck D."/>
            <person name="Sycamore N."/>
            <person name="Tester J."/>
            <person name="Thorpe A."/>
            <person name="Tracey A."/>
            <person name="Tromans A."/>
            <person name="Thomas D.W."/>
            <person name="Wall M."/>
            <person name="Wallis J.M."/>
            <person name="West A.P."/>
            <person name="Whitehead S.L."/>
            <person name="Willey D.L."/>
            <person name="Williams S.A."/>
            <person name="Wilming L."/>
            <person name="Wray P.W."/>
            <person name="Young L."/>
            <person name="Ashurst J.L."/>
            <person name="Coulson A."/>
            <person name="Blocker H."/>
            <person name="Durbin R.M."/>
            <person name="Sulston J.E."/>
            <person name="Hubbard T."/>
            <person name="Jackson M.J."/>
            <person name="Bentley D.R."/>
            <person name="Beck S."/>
            <person name="Rogers J."/>
            <person name="Dunham I."/>
        </authorList>
    </citation>
    <scope>NUCLEOTIDE SEQUENCE [LARGE SCALE GENOMIC DNA]</scope>
</reference>
<reference key="4">
    <citation type="submission" date="2005-07" db="EMBL/GenBank/DDBJ databases">
        <authorList>
            <person name="Mural R.J."/>
            <person name="Istrail S."/>
            <person name="Sutton G.G."/>
            <person name="Florea L."/>
            <person name="Halpern A.L."/>
            <person name="Mobarry C.M."/>
            <person name="Lippert R."/>
            <person name="Walenz B."/>
            <person name="Shatkay H."/>
            <person name="Dew I."/>
            <person name="Miller J.R."/>
            <person name="Flanigan M.J."/>
            <person name="Edwards N.J."/>
            <person name="Bolanos R."/>
            <person name="Fasulo D."/>
            <person name="Halldorsson B.V."/>
            <person name="Hannenhalli S."/>
            <person name="Turner R."/>
            <person name="Yooseph S."/>
            <person name="Lu F."/>
            <person name="Nusskern D.R."/>
            <person name="Shue B.C."/>
            <person name="Zheng X.H."/>
            <person name="Zhong F."/>
            <person name="Delcher A.L."/>
            <person name="Huson D.H."/>
            <person name="Kravitz S.A."/>
            <person name="Mouchard L."/>
            <person name="Reinert K."/>
            <person name="Remington K.A."/>
            <person name="Clark A.G."/>
            <person name="Waterman M.S."/>
            <person name="Eichler E.E."/>
            <person name="Adams M.D."/>
            <person name="Hunkapiller M.W."/>
            <person name="Myers E.W."/>
            <person name="Venter J.C."/>
        </authorList>
    </citation>
    <scope>NUCLEOTIDE SEQUENCE [LARGE SCALE GENOMIC DNA]</scope>
</reference>
<reference key="5">
    <citation type="journal article" date="2004" name="Genome Res.">
        <title>The status, quality, and expansion of the NIH full-length cDNA project: the Mammalian Gene Collection (MGC).</title>
        <authorList>
            <consortium name="The MGC Project Team"/>
        </authorList>
    </citation>
    <scope>NUCLEOTIDE SEQUENCE [LARGE SCALE MRNA] (ISOFORMS 1 AND 3)</scope>
    <source>
        <tissue>Lymph</tissue>
        <tissue>Muscle</tissue>
    </source>
</reference>
<reference key="6">
    <citation type="journal article" date="2003" name="Nat. Genet.">
        <title>Mutations in INVS encoding inversin cause nephronophthisis type 2, linking renal cystic disease to the function of primary cilia and left-right axis determination.</title>
        <authorList>
            <person name="Otto E.A."/>
            <person name="Schermer B."/>
            <person name="Obara T."/>
            <person name="O'Toole J.F."/>
            <person name="Hiller K.S."/>
            <person name="Mueller A.M."/>
            <person name="Ruf R.G."/>
            <person name="Hoefele J."/>
            <person name="Beekmann F."/>
            <person name="Landau D."/>
            <person name="Foreman J.W."/>
            <person name="Goodship J.A."/>
            <person name="Strachan T."/>
            <person name="Kispert A."/>
            <person name="Wolf M.T."/>
            <person name="Gagnadoux M.F."/>
            <person name="Nivet H."/>
            <person name="Antignac C."/>
            <person name="Walz G."/>
            <person name="Drummond I.A."/>
            <person name="Benzing T."/>
            <person name="Hildebrandt F."/>
        </authorList>
    </citation>
    <scope>SUBCELLULAR LOCATION</scope>
    <scope>TISSUE SPECIFICITY</scope>
    <scope>INTERACTION WITH NPHP1</scope>
    <scope>VARIANTS NPHP2 ARG-482 AND SER-493</scope>
</reference>
<reference key="7">
    <citation type="journal article" date="2005" name="Nat. Genet.">
        <title>Inversin, the gene product mutated in nephronophthisis type II, functions as a molecular switch between Wnt signaling pathways.</title>
        <authorList>
            <person name="Simons M."/>
            <person name="Gloy J."/>
            <person name="Ganner A."/>
            <person name="Bullerkotte A."/>
            <person name="Bashkurov M."/>
            <person name="Kroenig C."/>
            <person name="Schermer B."/>
            <person name="Benzing T."/>
            <person name="Cabello O.A."/>
            <person name="Jenny A."/>
            <person name="Mlodzik M."/>
            <person name="Polok B."/>
            <person name="Driever W."/>
            <person name="Obara T."/>
            <person name="Walz G."/>
        </authorList>
    </citation>
    <scope>FUNCTION</scope>
    <scope>INTERACTION WITH DVL1; PRICKLE AND VANGL</scope>
</reference>
<reference key="8">
    <citation type="journal article" date="2008" name="Am. J. Hum. Genet.">
        <title>Loss of nephrocystin-3 function can cause embryonic lethality, Meckel-Gruber-like syndrome, situs inversus, and renal-hepatic-pancreatic dysplasia.</title>
        <authorList>
            <person name="Bergmann C."/>
            <person name="Fliegauf M."/>
            <person name="Bruechle N.O."/>
            <person name="Frank V."/>
            <person name="Olbrich H."/>
            <person name="Kirschner J."/>
            <person name="Schermer B."/>
            <person name="Schmedding I."/>
            <person name="Kispert A."/>
            <person name="Kraenzlin B."/>
            <person name="Nuernberg G."/>
            <person name="Becker C."/>
            <person name="Grimm T."/>
            <person name="Girschick G."/>
            <person name="Lynch S.A."/>
            <person name="Kelehan P."/>
            <person name="Senderek J."/>
            <person name="Neuhaus T.J."/>
            <person name="Stallmach T."/>
            <person name="Zentgraf H."/>
            <person name="Nuernberg P."/>
            <person name="Gretz N."/>
            <person name="Lo C."/>
            <person name="Lienkamp S."/>
            <person name="Schaefer T."/>
            <person name="Walz G."/>
            <person name="Benzing T."/>
            <person name="Zerres K."/>
            <person name="Omran H."/>
        </authorList>
    </citation>
    <scope>FUNCTION</scope>
    <scope>INTERACTION WITH NPHP3</scope>
</reference>
<reference key="9">
    <citation type="journal article" date="2011" name="Cell">
        <title>Mapping the NPHP-JBTS-MKS protein network reveals ciliopathy disease genes and pathways.</title>
        <authorList>
            <person name="Sang L."/>
            <person name="Miller J.J."/>
            <person name="Corbit K.C."/>
            <person name="Giles R.H."/>
            <person name="Brauer M.J."/>
            <person name="Otto E.A."/>
            <person name="Baye L.M."/>
            <person name="Wen X."/>
            <person name="Scales S.J."/>
            <person name="Kwong M."/>
            <person name="Huntzicker E.G."/>
            <person name="Sfakianos M.K."/>
            <person name="Sandoval W."/>
            <person name="Bazan J.F."/>
            <person name="Kulkarni P."/>
            <person name="Garcia-Gonzalo F.R."/>
            <person name="Seol A.D."/>
            <person name="O'Toole J.F."/>
            <person name="Held S."/>
            <person name="Reutter H.M."/>
            <person name="Lane W.S."/>
            <person name="Rafiq M.A."/>
            <person name="Noor A."/>
            <person name="Ansar M."/>
            <person name="Devi A.R."/>
            <person name="Sheffield V.C."/>
            <person name="Slusarski D.C."/>
            <person name="Vincent J.B."/>
            <person name="Doherty D.A."/>
            <person name="Hildebrandt F."/>
            <person name="Reiter J.F."/>
            <person name="Jackson P.K."/>
        </authorList>
    </citation>
    <scope>INTERACTION WITH NPHP1 AND IQCB1</scope>
</reference>
<reference key="10">
    <citation type="journal article" date="2013" name="J. Proteome Res.">
        <title>Toward a comprehensive characterization of a human cancer cell phosphoproteome.</title>
        <authorList>
            <person name="Zhou H."/>
            <person name="Di Palma S."/>
            <person name="Preisinger C."/>
            <person name="Peng M."/>
            <person name="Polat A.N."/>
            <person name="Heck A.J."/>
            <person name="Mohammed S."/>
        </authorList>
    </citation>
    <scope>PHOSPHORYLATION [LARGE SCALE ANALYSIS] AT SER-661</scope>
    <scope>IDENTIFICATION BY MASS SPECTROMETRY [LARGE SCALE ANALYSIS]</scope>
    <source>
        <tissue>Erythroleukemia</tissue>
    </source>
</reference>
<reference key="11">
    <citation type="journal article" date="2013" name="Nat. Genet.">
        <title>ANKS6 is a central component of a nephronophthisis module linking NEK8 to INVS and NPHP3.</title>
        <authorList>
            <person name="Hoff S."/>
            <person name="Halbritter J."/>
            <person name="Epting D."/>
            <person name="Frank V."/>
            <person name="Nguyen T.M."/>
            <person name="van Reeuwijk J."/>
            <person name="Boehlke C."/>
            <person name="Schell C."/>
            <person name="Yasunaga T."/>
            <person name="Helmstadter M."/>
            <person name="Mergen M."/>
            <person name="Filhol E."/>
            <person name="Boldt K."/>
            <person name="Horn N."/>
            <person name="Ueffing M."/>
            <person name="Otto E.A."/>
            <person name="Eisenberger T."/>
            <person name="Elting M.W."/>
            <person name="van Wijk J.A."/>
            <person name="Bockenhauer D."/>
            <person name="Sebire N.J."/>
            <person name="Rittig S."/>
            <person name="Vyberg M."/>
            <person name="Ring T."/>
            <person name="Pohl M."/>
            <person name="Pape L."/>
            <person name="Neuhaus T.J."/>
            <person name="Elshakhs N.A."/>
            <person name="Koon S.J."/>
            <person name="Harris P.C."/>
            <person name="Grahammer F."/>
            <person name="Huber T.B."/>
            <person name="Kuehn E.W."/>
            <person name="Kramer-Zucker A."/>
            <person name="Bolz H.J."/>
            <person name="Roepman R."/>
            <person name="Saunier S."/>
            <person name="Walz G."/>
            <person name="Hildebrandt F."/>
            <person name="Bergmann C."/>
            <person name="Lienkamp S.S."/>
        </authorList>
    </citation>
    <scope>INTERACTION WITH ANKS6; NEK8 AND NPHP3</scope>
    <scope>HYDROXYLATION AT ASN-75</scope>
</reference>
<gene>
    <name type="primary">INVS</name>
    <name type="synonym">INV</name>
    <name type="synonym">NPHP2</name>
</gene>
<evidence type="ECO:0000250" key="1"/>
<evidence type="ECO:0000255" key="2">
    <source>
        <dbReference type="PROSITE-ProRule" id="PRU00116"/>
    </source>
</evidence>
<evidence type="ECO:0000256" key="3">
    <source>
        <dbReference type="SAM" id="MobiDB-lite"/>
    </source>
</evidence>
<evidence type="ECO:0000269" key="4">
    <source>
    </source>
</evidence>
<evidence type="ECO:0000269" key="5">
    <source>
    </source>
</evidence>
<evidence type="ECO:0000269" key="6">
    <source>
    </source>
</evidence>
<evidence type="ECO:0000269" key="7">
    <source>
    </source>
</evidence>
<evidence type="ECO:0000269" key="8">
    <source>
    </source>
</evidence>
<evidence type="ECO:0000269" key="9">
    <source>
    </source>
</evidence>
<evidence type="ECO:0000303" key="10">
    <source>
    </source>
</evidence>
<evidence type="ECO:0000303" key="11">
    <source>
    </source>
</evidence>
<evidence type="ECO:0000305" key="12"/>
<evidence type="ECO:0007744" key="13">
    <source>
    </source>
</evidence>
<organism>
    <name type="scientific">Homo sapiens</name>
    <name type="common">Human</name>
    <dbReference type="NCBI Taxonomy" id="9606"/>
    <lineage>
        <taxon>Eukaryota</taxon>
        <taxon>Metazoa</taxon>
        <taxon>Chordata</taxon>
        <taxon>Craniata</taxon>
        <taxon>Vertebrata</taxon>
        <taxon>Euteleostomi</taxon>
        <taxon>Mammalia</taxon>
        <taxon>Eutheria</taxon>
        <taxon>Euarchontoglires</taxon>
        <taxon>Primates</taxon>
        <taxon>Haplorrhini</taxon>
        <taxon>Catarrhini</taxon>
        <taxon>Hominidae</taxon>
        <taxon>Homo</taxon>
    </lineage>
</organism>
<keyword id="KW-0025">Alternative splicing</keyword>
<keyword id="KW-0040">ANK repeat</keyword>
<keyword id="KW-0112">Calmodulin-binding</keyword>
<keyword id="KW-0966">Cell projection</keyword>
<keyword id="KW-1186">Ciliopathy</keyword>
<keyword id="KW-0969">Cilium</keyword>
<keyword id="KW-0963">Cytoplasm</keyword>
<keyword id="KW-0206">Cytoskeleton</keyword>
<keyword id="KW-0217">Developmental protein</keyword>
<keyword id="KW-0225">Disease variant</keyword>
<keyword id="KW-0379">Hydroxylation</keyword>
<keyword id="KW-0472">Membrane</keyword>
<keyword id="KW-0493">Microtubule</keyword>
<keyword id="KW-0983">Nephronophthisis</keyword>
<keyword id="KW-0539">Nucleus</keyword>
<keyword id="KW-0597">Phosphoprotein</keyword>
<keyword id="KW-1267">Proteomics identification</keyword>
<keyword id="KW-1185">Reference proteome</keyword>
<keyword id="KW-0677">Repeat</keyword>
<keyword id="KW-0832">Ubl conjugation</keyword>
<keyword id="KW-0879">Wnt signaling pathway</keyword>
<comment type="function">
    <text evidence="1 6 7">Required for normal renal development and establishment of left-right axis. Probably acts as a molecular switch between different Wnt signaling pathways. Inhibits the canonical Wnt pathway by targeting cytoplasmic disheveled (DVL1) for degradation by the ubiquitin-proteasome. This suggests that it is required in renal development to oppose the repression of terminal differentiation of tubular epithelial cells by Wnt signaling. Involved in the organization of apical junctions in kidney cells together with NPHP1, NPHP4 and RPGRIP1L/NPHP8 (By similarity). Does not seem to be strictly required for ciliogenesis (By similarity).</text>
</comment>
<comment type="subunit">
    <text evidence="1 5 6 7 8 9">Binds calmodulin via its IQ domains. Interacts with APC2. Interacts with alpha-, beta-, and gamma-catenin. Interacts with N-cadherin (CDH2). Interacts with microtubules (By similarity). Interacts with NPHP1. Interacts with DVL1, PRICKLE (PRICKLE1 or PRICKLE2) and Strabismus (VANGL1 or VANGL2). Interacts with IQCB1; the interaction likely requires additional interactors. Component of a complex containing at least ANKS6, INVS, NEK8 and NPHP3. ANKS6 may organize complex assembly by linking INVS and NPHP3 to NEK8 and INVS may target the complex to the proximal ciliary axoneme.</text>
</comment>
<comment type="interaction">
    <interactant intactId="EBI-751472">
        <id>Q9Y283</id>
    </interactant>
    <interactant intactId="EBI-6958971">
        <id>Q9BPU9</id>
        <label>B9D2</label>
    </interactant>
    <organismsDiffer>false</organismsDiffer>
    <experiments>4</experiments>
</comment>
<comment type="interaction">
    <interactant intactId="EBI-751472">
        <id>Q9Y283</id>
    </interactant>
    <interactant intactId="EBI-353675">
        <id>Q9Y265</id>
        <label>RUVBL1</label>
    </interactant>
    <organismsDiffer>false</organismsDiffer>
    <experiments>2</experiments>
</comment>
<comment type="interaction">
    <interactant intactId="EBI-11944909">
        <id>Q9Y283-3</id>
    </interactant>
    <interactant intactId="EBI-2432309">
        <id>Q92876</id>
        <label>KLK6</label>
    </interactant>
    <organismsDiffer>false</organismsDiffer>
    <experiments>3</experiments>
</comment>
<comment type="subcellular location">
    <subcellularLocation>
        <location evidence="1">Cytoplasm</location>
    </subcellularLocation>
    <subcellularLocation>
        <location evidence="1">Cytoplasm</location>
        <location evidence="1">Cytoskeleton</location>
    </subcellularLocation>
    <subcellularLocation>
        <location evidence="1">Cytoplasm</location>
        <location evidence="1">Cytoskeleton</location>
        <location evidence="1">Spindle</location>
    </subcellularLocation>
    <subcellularLocation>
        <location evidence="1">Membrane</location>
        <topology evidence="1">Peripheral membrane protein</topology>
    </subcellularLocation>
    <subcellularLocation>
        <location evidence="1">Nucleus</location>
    </subcellularLocation>
    <subcellularLocation>
        <location evidence="5">Cell projection</location>
        <location evidence="5">Cilium</location>
    </subcellularLocation>
    <text>Associates with several components of the cytoskeleton including ciliary, random and polarized microtubules. During mitosis, it is recruited to mitotic spindle. Frequently membrane-associated, membrane localization is dependent upon cell-cell contacts and is redistributed when cell adhesion is disrupted after incubation of the cell monolayer with low-calcium/EGTA medium.</text>
</comment>
<comment type="alternative products">
    <event type="alternative splicing"/>
    <isoform>
        <id>Q9Y283-1</id>
        <name>1</name>
        <sequence type="displayed"/>
    </isoform>
    <isoform>
        <id>Q9Y283-2</id>
        <name>2</name>
        <name>S2</name>
        <sequence type="described" ref="VSP_014497"/>
    </isoform>
    <isoform>
        <id>Q9Y283-3</id>
        <name>3</name>
        <sequence type="described" ref="VSP_014495 VSP_014496"/>
    </isoform>
</comment>
<comment type="tissue specificity">
    <text evidence="4 5">Widely expressed. Strongly expressed in the primary cilia of renal tubular cells.</text>
</comment>
<comment type="domain">
    <text evidence="1">The D-box 1 (destruction box 1) mediates the interaction with APC2, and may act as a recognition signal for degradation via the ubiquitin-proteasome pathway.</text>
</comment>
<comment type="PTM">
    <text evidence="1">May be ubiquitinated via its interaction with APC2.</text>
</comment>
<comment type="PTM">
    <text evidence="9">Hydroxylated at Asn-75, most probably by HIF1AN.</text>
</comment>
<comment type="disease" evidence="5">
    <disease id="DI-00804">
        <name>Nephronophthisis 2</name>
        <acronym>NPHP2</acronym>
        <description>An autosomal recessive disorder resulting in end-stage renal disease. It is characterized by early onset and rapid progression. Phenotypic manifestations include enlarged kidneys, chronic tubulo-interstitial nephritis, anemia, hyperkalemic metabolic acidosis. Some patients also display situs inversus. Pathologically, it differs from later-onset nephronophthisis by the absence of medullary cysts and thickened tubular basement membranes, and by the presence of cortical microcysts.</description>
        <dbReference type="MIM" id="602088"/>
    </disease>
    <text>The disease is caused by variants affecting the gene represented in this entry.</text>
</comment>
<comment type="sequence caution" evidence="12">
    <conflict type="erroneous initiation">
        <sequence resource="EMBL-CDS" id="AAD02131"/>
    </conflict>
    <text>Truncated N-terminus.</text>
</comment>
<comment type="sequence caution" evidence="12">
    <conflict type="miscellaneous discrepancy">
        <sequence resource="EMBL-CDS" id="AAH41665"/>
    </conflict>
    <text>Contaminating sequence. Potential poly-A sequence.</text>
</comment>
<accession>Q9Y283</accession>
<accession>A2A2Y2</accession>
<accession>Q2NKL0</accession>
<accession>Q5W0T6</accession>
<accession>Q8IVX8</accession>
<accession>Q9BRB9</accession>
<accession>Q9Y488</accession>
<accession>Q9Y498</accession>
<sequence length="1065" mass="117826">MNKSENLLFAGSSLASQVHAAAVNGDKGALQRLIVGNSALKDKEDQFGRTPLMYCVLADRLDCADALLKAGADVNKTDHSQRTALHLAAQKGNYRFMKLLLTRRANWMQKDLEEMTPLHLTTRHRSPKCLALLLKFMAPGEVDTQDKNKQTALHWSAYYNNPEHVKLLIKHDSNIGIPDVEGKIPLHWAANHKDPSAVHTVRCILDAAPTESLLNWQDYEGRTPLHFAVADGNVTVVDVLTSYESCNITSYDNLFRTPLHWAALLGHAQIVHLLLERNKSGTIPSDSQGATPLHYAAQSNFAETVKVFLKHPSVKDDSDLEGRTSFMWAAGKGSDDVLRTMLSLKSDIDINMADKYGGTALHAAALSGHVSTVKLLLENNAQVDATDVMKHTPLFRACEMGHKDVIQTLIKGGARVDLVDQDGHSLLHWAALGGNADVCQILIENKINPNVQDYAGRTPLQCAAYGGYINCMAVLMENNADPNIQDKEGRTALHWSCNNGYLDAIKLLLDFAAFPNQMENNEERYTPLDYALLGERHEVIQFMLEHGALSIAAIQDIAAFKIQAVYKGYKVRKAFRDRKNLLMKHEQLRKDAAAKKREEENKRKEAEQQKGRRSPDSCRPQALPCLPSTQDVPSRQSRAPSKQPPAGNVAQGPEPRDSRGSPGGSLGGALQKEQHVSSDLQGTNSRRPNETAREHSKGQSACVHFRPNEGSDGSRHPGVPSVEKSRGETAGDERCAKGKGFVKQPSCIRVAGPDEKGEDSRRAAASLPPHDSHWKPSRRHDTEPKAKCAPQKRRTQELRGGRCSPAGSSRPGSARGEAVHAGQNPPHHRTPRNKVTQAKLTGGLYSHLPQSTEELRSGARRLETSTLSEDFQVSKETDPAPGPLSGQSVNIDLLPVELRLQIIQRERRRKELFRKKNKAAAVIQRAWRSYQLRKHLSHLRHMKQLGAGDVDRWRQESTALLLQVWRKELELKFPQTTAVSKAPKSPSKGTSGTKSTKHSVLKQIYGCSHEGKIHHPTRSVKASSVLRLNSVSNLQCIHLLENSGRSKNFSYNLQSATQPKNKTKP</sequence>
<proteinExistence type="evidence at protein level"/>
<dbReference type="EMBL" id="AF039217">
    <property type="protein sequence ID" value="AAD02131.2"/>
    <property type="status" value="ALT_INIT"/>
    <property type="molecule type" value="mRNA"/>
</dbReference>
<dbReference type="EMBL" id="AF084367">
    <property type="protein sequence ID" value="AAC79436.1"/>
    <property type="molecule type" value="mRNA"/>
</dbReference>
<dbReference type="EMBL" id="AF084382">
    <property type="protein sequence ID" value="AAC79456.1"/>
    <property type="molecule type" value="Genomic_DNA"/>
</dbReference>
<dbReference type="EMBL" id="AF084373">
    <property type="protein sequence ID" value="AAC79456.1"/>
    <property type="status" value="JOINED"/>
    <property type="molecule type" value="Genomic_DNA"/>
</dbReference>
<dbReference type="EMBL" id="AF084374">
    <property type="protein sequence ID" value="AAC79456.1"/>
    <property type="status" value="JOINED"/>
    <property type="molecule type" value="Genomic_DNA"/>
</dbReference>
<dbReference type="EMBL" id="AF084375">
    <property type="protein sequence ID" value="AAC79456.1"/>
    <property type="status" value="JOINED"/>
    <property type="molecule type" value="Genomic_DNA"/>
</dbReference>
<dbReference type="EMBL" id="AF084377">
    <property type="protein sequence ID" value="AAC79456.1"/>
    <property type="status" value="JOINED"/>
    <property type="molecule type" value="Genomic_DNA"/>
</dbReference>
<dbReference type="EMBL" id="AF084379">
    <property type="protein sequence ID" value="AAC79456.1"/>
    <property type="status" value="JOINED"/>
    <property type="molecule type" value="Genomic_DNA"/>
</dbReference>
<dbReference type="EMBL" id="AF084381">
    <property type="protein sequence ID" value="AAC79456.1"/>
    <property type="status" value="JOINED"/>
    <property type="molecule type" value="Genomic_DNA"/>
</dbReference>
<dbReference type="EMBL" id="AF084371">
    <property type="protein sequence ID" value="AAC79456.1"/>
    <property type="status" value="JOINED"/>
    <property type="molecule type" value="Genomic_DNA"/>
</dbReference>
<dbReference type="EMBL" id="AF084369">
    <property type="protein sequence ID" value="AAC79456.1"/>
    <property type="status" value="JOINED"/>
    <property type="molecule type" value="Genomic_DNA"/>
</dbReference>
<dbReference type="EMBL" id="AF084368">
    <property type="protein sequence ID" value="AAC79456.1"/>
    <property type="status" value="JOINED"/>
    <property type="molecule type" value="Genomic_DNA"/>
</dbReference>
<dbReference type="EMBL" id="AF084370">
    <property type="protein sequence ID" value="AAC79456.1"/>
    <property type="status" value="JOINED"/>
    <property type="molecule type" value="Genomic_DNA"/>
</dbReference>
<dbReference type="EMBL" id="AF084372">
    <property type="protein sequence ID" value="AAC79456.1"/>
    <property type="status" value="JOINED"/>
    <property type="molecule type" value="Genomic_DNA"/>
</dbReference>
<dbReference type="EMBL" id="AF084380">
    <property type="protein sequence ID" value="AAC79456.1"/>
    <property type="status" value="JOINED"/>
    <property type="molecule type" value="Genomic_DNA"/>
</dbReference>
<dbReference type="EMBL" id="AF084378">
    <property type="protein sequence ID" value="AAC79456.1"/>
    <property type="status" value="JOINED"/>
    <property type="molecule type" value="Genomic_DNA"/>
</dbReference>
<dbReference type="EMBL" id="AF084376">
    <property type="protein sequence ID" value="AAC79456.1"/>
    <property type="status" value="JOINED"/>
    <property type="molecule type" value="Genomic_DNA"/>
</dbReference>
<dbReference type="EMBL" id="AF084382">
    <property type="protein sequence ID" value="AAC79457.1"/>
    <property type="molecule type" value="Genomic_DNA"/>
</dbReference>
<dbReference type="EMBL" id="AF084368">
    <property type="protein sequence ID" value="AAC79457.1"/>
    <property type="status" value="JOINED"/>
    <property type="molecule type" value="Genomic_DNA"/>
</dbReference>
<dbReference type="EMBL" id="AF084369">
    <property type="protein sequence ID" value="AAC79457.1"/>
    <property type="status" value="JOINED"/>
    <property type="molecule type" value="Genomic_DNA"/>
</dbReference>
<dbReference type="EMBL" id="AF084370">
    <property type="protein sequence ID" value="AAC79457.1"/>
    <property type="status" value="JOINED"/>
    <property type="molecule type" value="Genomic_DNA"/>
</dbReference>
<dbReference type="EMBL" id="AF084371">
    <property type="protein sequence ID" value="AAC79457.1"/>
    <property type="status" value="JOINED"/>
    <property type="molecule type" value="Genomic_DNA"/>
</dbReference>
<dbReference type="EMBL" id="AF084372">
    <property type="protein sequence ID" value="AAC79457.1"/>
    <property type="status" value="JOINED"/>
    <property type="molecule type" value="Genomic_DNA"/>
</dbReference>
<dbReference type="EMBL" id="AF084373">
    <property type="protein sequence ID" value="AAC79457.1"/>
    <property type="status" value="JOINED"/>
    <property type="molecule type" value="Genomic_DNA"/>
</dbReference>
<dbReference type="EMBL" id="AF084374">
    <property type="protein sequence ID" value="AAC79457.1"/>
    <property type="status" value="JOINED"/>
    <property type="molecule type" value="Genomic_DNA"/>
</dbReference>
<dbReference type="EMBL" id="AF084375">
    <property type="protein sequence ID" value="AAC79457.1"/>
    <property type="status" value="JOINED"/>
    <property type="molecule type" value="Genomic_DNA"/>
</dbReference>
<dbReference type="EMBL" id="AF084376">
    <property type="protein sequence ID" value="AAC79457.1"/>
    <property type="status" value="JOINED"/>
    <property type="molecule type" value="Genomic_DNA"/>
</dbReference>
<dbReference type="EMBL" id="AF084377">
    <property type="protein sequence ID" value="AAC79457.1"/>
    <property type="status" value="JOINED"/>
    <property type="molecule type" value="Genomic_DNA"/>
</dbReference>
<dbReference type="EMBL" id="AF084378">
    <property type="protein sequence ID" value="AAC79457.1"/>
    <property type="status" value="JOINED"/>
    <property type="molecule type" value="Genomic_DNA"/>
</dbReference>
<dbReference type="EMBL" id="AF084379">
    <property type="protein sequence ID" value="AAC79457.1"/>
    <property type="status" value="JOINED"/>
    <property type="molecule type" value="Genomic_DNA"/>
</dbReference>
<dbReference type="EMBL" id="AF084380">
    <property type="protein sequence ID" value="AAC79457.1"/>
    <property type="status" value="JOINED"/>
    <property type="molecule type" value="Genomic_DNA"/>
</dbReference>
<dbReference type="EMBL" id="AF084381">
    <property type="protein sequence ID" value="AAC79457.1"/>
    <property type="status" value="JOINED"/>
    <property type="molecule type" value="Genomic_DNA"/>
</dbReference>
<dbReference type="EMBL" id="AL137072">
    <property type="status" value="NOT_ANNOTATED_CDS"/>
    <property type="molecule type" value="Genomic_DNA"/>
</dbReference>
<dbReference type="EMBL" id="AL445214">
    <property type="status" value="NOT_ANNOTATED_CDS"/>
    <property type="molecule type" value="Genomic_DNA"/>
</dbReference>
<dbReference type="EMBL" id="AL356798">
    <property type="status" value="NOT_ANNOTATED_CDS"/>
    <property type="molecule type" value="Genomic_DNA"/>
</dbReference>
<dbReference type="EMBL" id="CH471105">
    <property type="protein sequence ID" value="EAW58926.1"/>
    <property type="molecule type" value="Genomic_DNA"/>
</dbReference>
<dbReference type="EMBL" id="BC006370">
    <property type="protein sequence ID" value="AAH06370.1"/>
    <property type="molecule type" value="mRNA"/>
</dbReference>
<dbReference type="EMBL" id="BC041665">
    <property type="protein sequence ID" value="AAH41665.1"/>
    <property type="status" value="ALT_SEQ"/>
    <property type="molecule type" value="mRNA"/>
</dbReference>
<dbReference type="EMBL" id="BC111761">
    <property type="protein sequence ID" value="AAI11762.1"/>
    <property type="molecule type" value="mRNA"/>
</dbReference>
<dbReference type="CCDS" id="CCDS6746.1">
    <molecule id="Q9Y283-1"/>
</dbReference>
<dbReference type="RefSeq" id="NP_055240.2">
    <molecule id="Q9Y283-1"/>
    <property type="nucleotide sequence ID" value="NM_014425.4"/>
</dbReference>
<dbReference type="SMR" id="Q9Y283"/>
<dbReference type="BioGRID" id="118021">
    <property type="interactions" value="18"/>
</dbReference>
<dbReference type="CORUM" id="Q9Y283"/>
<dbReference type="FunCoup" id="Q9Y283">
    <property type="interactions" value="343"/>
</dbReference>
<dbReference type="IntAct" id="Q9Y283">
    <property type="interactions" value="16"/>
</dbReference>
<dbReference type="MINT" id="Q9Y283"/>
<dbReference type="STRING" id="9606.ENSP00000262457"/>
<dbReference type="GlyGen" id="Q9Y283">
    <property type="glycosylation" value="2 sites, 1 O-linked glycan (2 sites)"/>
</dbReference>
<dbReference type="iPTMnet" id="Q9Y283"/>
<dbReference type="PhosphoSitePlus" id="Q9Y283"/>
<dbReference type="BioMuta" id="INVS"/>
<dbReference type="DMDM" id="68565551"/>
<dbReference type="jPOST" id="Q9Y283"/>
<dbReference type="MassIVE" id="Q9Y283"/>
<dbReference type="PaxDb" id="9606-ENSP00000262457"/>
<dbReference type="PeptideAtlas" id="Q9Y283"/>
<dbReference type="ProteomicsDB" id="85690">
    <molecule id="Q9Y283-1"/>
</dbReference>
<dbReference type="ProteomicsDB" id="85691">
    <molecule id="Q9Y283-2"/>
</dbReference>
<dbReference type="Pumba" id="Q9Y283"/>
<dbReference type="Antibodypedia" id="29080">
    <property type="antibodies" value="110 antibodies from 19 providers"/>
</dbReference>
<dbReference type="DNASU" id="27130"/>
<dbReference type="Ensembl" id="ENST00000262456.6">
    <molecule id="Q9Y283-2"/>
    <property type="protein sequence ID" value="ENSP00000262456.2"/>
    <property type="gene ID" value="ENSG00000119509.13"/>
</dbReference>
<dbReference type="Ensembl" id="ENST00000262457.7">
    <molecule id="Q9Y283-1"/>
    <property type="protein sequence ID" value="ENSP00000262457.2"/>
    <property type="gene ID" value="ENSG00000119509.13"/>
</dbReference>
<dbReference type="Ensembl" id="ENST00000374921.3">
    <molecule id="Q9Y283-3"/>
    <property type="protein sequence ID" value="ENSP00000364056.3"/>
    <property type="gene ID" value="ENSG00000119509.13"/>
</dbReference>
<dbReference type="GeneID" id="27130"/>
<dbReference type="KEGG" id="hsa:27130"/>
<dbReference type="MANE-Select" id="ENST00000262457.7">
    <property type="protein sequence ID" value="ENSP00000262457.2"/>
    <property type="RefSeq nucleotide sequence ID" value="NM_014425.5"/>
    <property type="RefSeq protein sequence ID" value="NP_055240.2"/>
</dbReference>
<dbReference type="UCSC" id="uc004bao.3">
    <molecule id="Q9Y283-1"/>
    <property type="organism name" value="human"/>
</dbReference>
<dbReference type="AGR" id="HGNC:17870"/>
<dbReference type="CTD" id="27130"/>
<dbReference type="DisGeNET" id="27130"/>
<dbReference type="GeneCards" id="INVS"/>
<dbReference type="GeneReviews" id="INVS"/>
<dbReference type="HGNC" id="HGNC:17870">
    <property type="gene designation" value="INVS"/>
</dbReference>
<dbReference type="HPA" id="ENSG00000119509">
    <property type="expression patterns" value="Low tissue specificity"/>
</dbReference>
<dbReference type="MalaCards" id="INVS"/>
<dbReference type="MIM" id="243305">
    <property type="type" value="gene"/>
</dbReference>
<dbReference type="MIM" id="602088">
    <property type="type" value="phenotype"/>
</dbReference>
<dbReference type="neXtProt" id="NX_Q9Y283"/>
<dbReference type="OpenTargets" id="ENSG00000119509"/>
<dbReference type="Orphanet" id="93591">
    <property type="disease" value="Infantile nephronophthisis"/>
</dbReference>
<dbReference type="Orphanet" id="3156">
    <property type="disease" value="Senior-Loken syndrome"/>
</dbReference>
<dbReference type="PharmGKB" id="PA38472"/>
<dbReference type="VEuPathDB" id="HostDB:ENSG00000119509"/>
<dbReference type="eggNOG" id="KOG0504">
    <property type="taxonomic scope" value="Eukaryota"/>
</dbReference>
<dbReference type="GeneTree" id="ENSGT00940000157688"/>
<dbReference type="HOGENOM" id="CLU_010082_0_0_1"/>
<dbReference type="InParanoid" id="Q9Y283"/>
<dbReference type="OMA" id="DGHWKPS"/>
<dbReference type="OrthoDB" id="20872at2759"/>
<dbReference type="PAN-GO" id="Q9Y283">
    <property type="GO annotations" value="2 GO annotations based on evolutionary models"/>
</dbReference>
<dbReference type="PhylomeDB" id="Q9Y283"/>
<dbReference type="TreeFam" id="TF312824"/>
<dbReference type="PathwayCommons" id="Q9Y283"/>
<dbReference type="SignaLink" id="Q9Y283"/>
<dbReference type="SIGNOR" id="Q9Y283"/>
<dbReference type="BioGRID-ORCS" id="27130">
    <property type="hits" value="13 hits in 1161 CRISPR screens"/>
</dbReference>
<dbReference type="CD-CODE" id="232F8A39">
    <property type="entry name" value="P-body"/>
</dbReference>
<dbReference type="ChiTaRS" id="INVS">
    <property type="organism name" value="human"/>
</dbReference>
<dbReference type="GeneWiki" id="INVS"/>
<dbReference type="GenomeRNAi" id="27130"/>
<dbReference type="Pharos" id="Q9Y283">
    <property type="development level" value="Tbio"/>
</dbReference>
<dbReference type="PRO" id="PR:Q9Y283"/>
<dbReference type="Proteomes" id="UP000005640">
    <property type="component" value="Chromosome 9"/>
</dbReference>
<dbReference type="RNAct" id="Q9Y283">
    <property type="molecule type" value="protein"/>
</dbReference>
<dbReference type="Bgee" id="ENSG00000119509">
    <property type="expression patterns" value="Expressed in calcaneal tendon and 137 other cell types or tissues"/>
</dbReference>
<dbReference type="ExpressionAtlas" id="Q9Y283">
    <property type="expression patterns" value="baseline and differential"/>
</dbReference>
<dbReference type="GO" id="GO:0005929">
    <property type="term" value="C:cilium"/>
    <property type="evidence" value="ECO:0000318"/>
    <property type="project" value="GO_Central"/>
</dbReference>
<dbReference type="GO" id="GO:0005737">
    <property type="term" value="C:cytoplasm"/>
    <property type="evidence" value="ECO:0007669"/>
    <property type="project" value="UniProtKB-SubCell"/>
</dbReference>
<dbReference type="GO" id="GO:0016020">
    <property type="term" value="C:membrane"/>
    <property type="evidence" value="ECO:0007669"/>
    <property type="project" value="UniProtKB-SubCell"/>
</dbReference>
<dbReference type="GO" id="GO:0005874">
    <property type="term" value="C:microtubule"/>
    <property type="evidence" value="ECO:0007669"/>
    <property type="project" value="UniProtKB-KW"/>
</dbReference>
<dbReference type="GO" id="GO:0005634">
    <property type="term" value="C:nucleus"/>
    <property type="evidence" value="ECO:0007669"/>
    <property type="project" value="UniProtKB-SubCell"/>
</dbReference>
<dbReference type="GO" id="GO:0005819">
    <property type="term" value="C:spindle"/>
    <property type="evidence" value="ECO:0007669"/>
    <property type="project" value="UniProtKB-SubCell"/>
</dbReference>
<dbReference type="GO" id="GO:0005516">
    <property type="term" value="F:calmodulin binding"/>
    <property type="evidence" value="ECO:0007669"/>
    <property type="project" value="UniProtKB-KW"/>
</dbReference>
<dbReference type="GO" id="GO:0001822">
    <property type="term" value="P:kidney development"/>
    <property type="evidence" value="ECO:0000318"/>
    <property type="project" value="GO_Central"/>
</dbReference>
<dbReference type="GO" id="GO:0090090">
    <property type="term" value="P:negative regulation of canonical Wnt signaling pathway"/>
    <property type="evidence" value="ECO:0000314"/>
    <property type="project" value="UniProtKB"/>
</dbReference>
<dbReference type="GO" id="GO:1904108">
    <property type="term" value="P:protein localization to ciliary inversin compartment"/>
    <property type="evidence" value="ECO:0000318"/>
    <property type="project" value="GO_Central"/>
</dbReference>
<dbReference type="GO" id="GO:0016055">
    <property type="term" value="P:Wnt signaling pathway"/>
    <property type="evidence" value="ECO:0007669"/>
    <property type="project" value="UniProtKB-KW"/>
</dbReference>
<dbReference type="CDD" id="cd23767">
    <property type="entry name" value="IQCD"/>
    <property type="match status" value="2"/>
</dbReference>
<dbReference type="FunFam" id="1.25.40.20:FF:000078">
    <property type="entry name" value="Inversin"/>
    <property type="match status" value="1"/>
</dbReference>
<dbReference type="FunFam" id="1.25.40.20:FF:000082">
    <property type="entry name" value="Inversin"/>
    <property type="match status" value="1"/>
</dbReference>
<dbReference type="FunFam" id="1.25.40.20:FF:000092">
    <property type="entry name" value="inversin isoform X1"/>
    <property type="match status" value="1"/>
</dbReference>
<dbReference type="FunFam" id="1.25.40.20:FF:000134">
    <property type="entry name" value="inversin isoform X1"/>
    <property type="match status" value="1"/>
</dbReference>
<dbReference type="FunFam" id="1.25.40.20:FF:000144">
    <property type="entry name" value="inversin isoform X1"/>
    <property type="match status" value="1"/>
</dbReference>
<dbReference type="Gene3D" id="1.25.40.20">
    <property type="entry name" value="Ankyrin repeat-containing domain"/>
    <property type="match status" value="4"/>
</dbReference>
<dbReference type="InterPro" id="IPR002110">
    <property type="entry name" value="Ankyrin_rpt"/>
</dbReference>
<dbReference type="InterPro" id="IPR036770">
    <property type="entry name" value="Ankyrin_rpt-contain_sf"/>
</dbReference>
<dbReference type="InterPro" id="IPR000048">
    <property type="entry name" value="IQ_motif_EF-hand-BS"/>
</dbReference>
<dbReference type="PANTHER" id="PTHR24198">
    <property type="entry name" value="ANKYRIN REPEAT AND PROTEIN KINASE DOMAIN-CONTAINING PROTEIN"/>
    <property type="match status" value="1"/>
</dbReference>
<dbReference type="PANTHER" id="PTHR24198:SF194">
    <property type="entry name" value="INVERSIN-A"/>
    <property type="match status" value="1"/>
</dbReference>
<dbReference type="Pfam" id="PF00023">
    <property type="entry name" value="Ank"/>
    <property type="match status" value="3"/>
</dbReference>
<dbReference type="Pfam" id="PF12796">
    <property type="entry name" value="Ank_2"/>
    <property type="match status" value="4"/>
</dbReference>
<dbReference type="Pfam" id="PF00612">
    <property type="entry name" value="IQ"/>
    <property type="match status" value="2"/>
</dbReference>
<dbReference type="PRINTS" id="PR01415">
    <property type="entry name" value="ANKYRIN"/>
</dbReference>
<dbReference type="SMART" id="SM00248">
    <property type="entry name" value="ANK"/>
    <property type="match status" value="15"/>
</dbReference>
<dbReference type="SMART" id="SM00015">
    <property type="entry name" value="IQ"/>
    <property type="match status" value="2"/>
</dbReference>
<dbReference type="SUPFAM" id="SSF48403">
    <property type="entry name" value="Ankyrin repeat"/>
    <property type="match status" value="2"/>
</dbReference>
<dbReference type="PROSITE" id="PS50297">
    <property type="entry name" value="ANK_REP_REGION"/>
    <property type="match status" value="1"/>
</dbReference>
<dbReference type="PROSITE" id="PS50088">
    <property type="entry name" value="ANK_REPEAT"/>
    <property type="match status" value="11"/>
</dbReference>
<dbReference type="PROSITE" id="PS50096">
    <property type="entry name" value="IQ"/>
    <property type="match status" value="2"/>
</dbReference>